<comment type="function">
    <text evidence="1 5">E3 ubiquitin-protein ligase that catalyzes polyubiquitin chains (By similarity). Converts epidermis into cement gland and neural tissue in whole embryos.</text>
</comment>
<comment type="catalytic activity">
    <reaction>
        <text>S-ubiquitinyl-[E2 ubiquitin-conjugating enzyme]-L-cysteine + [acceptor protein]-L-lysine = [E2 ubiquitin-conjugating enzyme]-L-cysteine + N(6)-ubiquitinyl-[acceptor protein]-L-lysine.</text>
        <dbReference type="EC" id="2.3.2.27"/>
    </reaction>
</comment>
<comment type="pathway">
    <text>Protein modification; protein ubiquitination.</text>
</comment>
<comment type="subcellular location">
    <subcellularLocation>
        <location evidence="1">Endomembrane system</location>
        <topology evidence="1">Single-pass membrane protein</topology>
    </subcellularLocation>
    <subcellularLocation>
        <location evidence="1">Cytoplasm</location>
        <location evidence="1">Perinuclear region</location>
    </subcellularLocation>
</comment>
<comment type="tissue specificity">
    <text evidence="5">Expressed in the cement gland, cranial placodes, and the pronephros.</text>
</comment>
<comment type="developmental stage">
    <text evidence="5">Present as a maternal transcript. Early expression is confined to tissues of ectodermal origin. At stage 16, the predominant area of expression is within the developing cement gland. At stage 27, expression is detected in the anterodorsal lateral line placode, the olfactory placode, and the otic vesicle and pronephros.</text>
</comment>
<comment type="PTM">
    <text>Auto-ubiquitinated.</text>
</comment>
<organism>
    <name type="scientific">Xenopus laevis</name>
    <name type="common">African clawed frog</name>
    <dbReference type="NCBI Taxonomy" id="8355"/>
    <lineage>
        <taxon>Eukaryota</taxon>
        <taxon>Metazoa</taxon>
        <taxon>Chordata</taxon>
        <taxon>Craniata</taxon>
        <taxon>Vertebrata</taxon>
        <taxon>Euteleostomi</taxon>
        <taxon>Amphibia</taxon>
        <taxon>Batrachia</taxon>
        <taxon>Anura</taxon>
        <taxon>Pipoidea</taxon>
        <taxon>Pipidae</taxon>
        <taxon>Xenopodinae</taxon>
        <taxon>Xenopus</taxon>
        <taxon>Xenopus</taxon>
    </lineage>
</organism>
<feature type="signal peptide" evidence="2">
    <location>
        <begin position="1"/>
        <end position="31"/>
    </location>
</feature>
<feature type="chain" id="PRO_0000261415" description="E3 ubiquitin-protein ligase RNF128">
    <location>
        <begin position="32"/>
        <end position="404"/>
    </location>
</feature>
<feature type="transmembrane region" description="Helical" evidence="2">
    <location>
        <begin position="191"/>
        <end position="211"/>
    </location>
</feature>
<feature type="domain" description="PA">
    <location>
        <begin position="62"/>
        <end position="166"/>
    </location>
</feature>
<feature type="zinc finger region" description="RING-type; atypical" evidence="3">
    <location>
        <begin position="260"/>
        <end position="301"/>
    </location>
</feature>
<feature type="region of interest" description="Disordered" evidence="4">
    <location>
        <begin position="336"/>
        <end position="356"/>
    </location>
</feature>
<protein>
    <recommendedName>
        <fullName>E3 ubiquitin-protein ligase RNF128</fullName>
        <ecNumber>2.3.2.27</ecNumber>
    </recommendedName>
    <alternativeName>
        <fullName>Goliath-related E3 ubiquitin-protein ligase 1</fullName>
    </alternativeName>
    <alternativeName>
        <fullName>RING finger protein 128</fullName>
    </alternativeName>
    <alternativeName>
        <fullName evidence="6">RING-type E3 ubiquitin transferase RNF128</fullName>
    </alternativeName>
</protein>
<dbReference type="EC" id="2.3.2.27"/>
<dbReference type="EMBL" id="DQ911466">
    <property type="protein sequence ID" value="AAM51875.2"/>
    <property type="molecule type" value="mRNA"/>
</dbReference>
<dbReference type="RefSeq" id="NP_001090201.1">
    <property type="nucleotide sequence ID" value="NM_001096732.1"/>
</dbReference>
<dbReference type="SMR" id="Q8AWW4"/>
<dbReference type="GeneID" id="779098"/>
<dbReference type="KEGG" id="xla:779098"/>
<dbReference type="AGR" id="Xenbase:XB-GENE-6253090"/>
<dbReference type="CTD" id="779098"/>
<dbReference type="Xenbase" id="XB-GENE-6253090">
    <property type="gene designation" value="rnf128.L"/>
</dbReference>
<dbReference type="OMA" id="NKSRFFW"/>
<dbReference type="OrthoDB" id="5357315at2759"/>
<dbReference type="UniPathway" id="UPA00143"/>
<dbReference type="Proteomes" id="UP000186698">
    <property type="component" value="Chromosome 8L"/>
</dbReference>
<dbReference type="Bgee" id="779098">
    <property type="expression patterns" value="Expressed in stomach and 17 other cell types or tissues"/>
</dbReference>
<dbReference type="GO" id="GO:0012505">
    <property type="term" value="C:endomembrane system"/>
    <property type="evidence" value="ECO:0007669"/>
    <property type="project" value="UniProtKB-SubCell"/>
</dbReference>
<dbReference type="GO" id="GO:0016020">
    <property type="term" value="C:membrane"/>
    <property type="evidence" value="ECO:0007669"/>
    <property type="project" value="UniProtKB-KW"/>
</dbReference>
<dbReference type="GO" id="GO:0048471">
    <property type="term" value="C:perinuclear region of cytoplasm"/>
    <property type="evidence" value="ECO:0007669"/>
    <property type="project" value="UniProtKB-SubCell"/>
</dbReference>
<dbReference type="GO" id="GO:0016740">
    <property type="term" value="F:transferase activity"/>
    <property type="evidence" value="ECO:0007669"/>
    <property type="project" value="UniProtKB-KW"/>
</dbReference>
<dbReference type="GO" id="GO:0008270">
    <property type="term" value="F:zinc ion binding"/>
    <property type="evidence" value="ECO:0007669"/>
    <property type="project" value="UniProtKB-KW"/>
</dbReference>
<dbReference type="GO" id="GO:0016567">
    <property type="term" value="P:protein ubiquitination"/>
    <property type="evidence" value="ECO:0007669"/>
    <property type="project" value="UniProtKB-UniPathway"/>
</dbReference>
<dbReference type="CDD" id="cd02122">
    <property type="entry name" value="PA_GRAIL_like"/>
    <property type="match status" value="1"/>
</dbReference>
<dbReference type="CDD" id="cd16802">
    <property type="entry name" value="RING-H2_RNF128-like"/>
    <property type="match status" value="1"/>
</dbReference>
<dbReference type="FunFam" id="3.50.30.30:FF:000003">
    <property type="entry name" value="E3 ubiquitin-protein ligase RNF128"/>
    <property type="match status" value="1"/>
</dbReference>
<dbReference type="FunFam" id="3.30.40.10:FF:000009">
    <property type="entry name" value="E3 ubiquitin-protein ligase RNF130"/>
    <property type="match status" value="1"/>
</dbReference>
<dbReference type="Gene3D" id="3.50.30.30">
    <property type="match status" value="1"/>
</dbReference>
<dbReference type="Gene3D" id="3.30.40.10">
    <property type="entry name" value="Zinc/RING finger domain, C3HC4 (zinc finger)"/>
    <property type="match status" value="1"/>
</dbReference>
<dbReference type="InterPro" id="IPR046450">
    <property type="entry name" value="PA_dom_sf"/>
</dbReference>
<dbReference type="InterPro" id="IPR003137">
    <property type="entry name" value="PA_domain"/>
</dbReference>
<dbReference type="InterPro" id="IPR001841">
    <property type="entry name" value="Znf_RING"/>
</dbReference>
<dbReference type="InterPro" id="IPR013083">
    <property type="entry name" value="Znf_RING/FYVE/PHD"/>
</dbReference>
<dbReference type="PANTHER" id="PTHR46539">
    <property type="entry name" value="E3 UBIQUITIN-PROTEIN LIGASE ATL42"/>
    <property type="match status" value="1"/>
</dbReference>
<dbReference type="PANTHER" id="PTHR46539:SF27">
    <property type="entry name" value="RING FINGER PROTEIN 128"/>
    <property type="match status" value="1"/>
</dbReference>
<dbReference type="Pfam" id="PF02225">
    <property type="entry name" value="PA"/>
    <property type="match status" value="1"/>
</dbReference>
<dbReference type="Pfam" id="PF13639">
    <property type="entry name" value="zf-RING_2"/>
    <property type="match status" value="1"/>
</dbReference>
<dbReference type="SMART" id="SM00184">
    <property type="entry name" value="RING"/>
    <property type="match status" value="1"/>
</dbReference>
<dbReference type="SUPFAM" id="SSF52025">
    <property type="entry name" value="PA domain"/>
    <property type="match status" value="1"/>
</dbReference>
<dbReference type="SUPFAM" id="SSF57850">
    <property type="entry name" value="RING/U-box"/>
    <property type="match status" value="1"/>
</dbReference>
<dbReference type="PROSITE" id="PS50089">
    <property type="entry name" value="ZF_RING_2"/>
    <property type="match status" value="1"/>
</dbReference>
<gene>
    <name type="primary">rnf128</name>
    <name type="synonym">greul1</name>
</gene>
<sequence length="404" mass="44862">MGALKMRCQCFPLPYLSLLALLLLNLSLTRAETLWTANVNYSYVYDNKTYGEEGEIGVFGQDSPIERAAGLVVLPKSEKLYTACKDNVNFSVPSGWTGPWIALIQRGGGCTFTEKINRAAERGARAVVVYNNGIDNEVFEMSHPGTKDTVAIMIGNLKGNEIVDLIKGGMQVTMVIEVGRKHGSWINHYSIFFVSVSFFIVTAATVGYFIFYSARRWRLTRAQNKKQKRLKAEAKKAIGKLQLRTIKQGDKVLGPDGDSCAVCIEPYKPSDVVRILTCNHFFHKNCIDPWLLEHRTCPMCKCDILKSLGIAEDEEEGTSVAIPSVSSELQRSTVQITEEENHSETASSGYASVRGGDEQVDEGQHIYENTELVHEASATSIEVLPHMDNPGFESEDVHVHEMKS</sequence>
<proteinExistence type="evidence at transcript level"/>
<accession>Q8AWW4</accession>
<keyword id="KW-0963">Cytoplasm</keyword>
<keyword id="KW-0472">Membrane</keyword>
<keyword id="KW-0479">Metal-binding</keyword>
<keyword id="KW-1185">Reference proteome</keyword>
<keyword id="KW-0732">Signal</keyword>
<keyword id="KW-0808">Transferase</keyword>
<keyword id="KW-0812">Transmembrane</keyword>
<keyword id="KW-1133">Transmembrane helix</keyword>
<keyword id="KW-0832">Ubl conjugation</keyword>
<keyword id="KW-0833">Ubl conjugation pathway</keyword>
<keyword id="KW-0862">Zinc</keyword>
<keyword id="KW-0863">Zinc-finger</keyword>
<reference key="1">
    <citation type="journal article" date="2002" name="Dev. Biol.">
        <title>The E3 ubiquitin ligase GREUL1 anteriorizes ectoderm during Xenopus development.</title>
        <authorList>
            <person name="Borchers A.G.M."/>
            <person name="Hufton A.L."/>
            <person name="Eldridge A.G."/>
            <person name="Jackson P.K."/>
            <person name="Harland R.M."/>
            <person name="Baker J.C."/>
        </authorList>
    </citation>
    <scope>NUCLEOTIDE SEQUENCE [MRNA]</scope>
    <scope>FUNCTION</scope>
    <scope>TISSUE SPECIFICITY</scope>
    <scope>DEVELOPMENTAL STAGE</scope>
</reference>
<evidence type="ECO:0000250" key="1"/>
<evidence type="ECO:0000255" key="2"/>
<evidence type="ECO:0000255" key="3">
    <source>
        <dbReference type="PROSITE-ProRule" id="PRU00175"/>
    </source>
</evidence>
<evidence type="ECO:0000256" key="4">
    <source>
        <dbReference type="SAM" id="MobiDB-lite"/>
    </source>
</evidence>
<evidence type="ECO:0000269" key="5">
    <source>
    </source>
</evidence>
<evidence type="ECO:0000305" key="6"/>
<name>RN128_XENLA</name>